<protein>
    <recommendedName>
        <fullName>Uncharacterized protein DR8</fullName>
    </recommendedName>
</protein>
<name>DR8_HHV6U</name>
<feature type="chain" id="PRO_0000342568" description="Uncharacterized protein DR8">
    <location>
        <begin position="1"/>
        <end position="110"/>
    </location>
</feature>
<feature type="region of interest" description="Disordered" evidence="1">
    <location>
        <begin position="1"/>
        <end position="72"/>
    </location>
</feature>
<feature type="compositionally biased region" description="Basic residues" evidence="1">
    <location>
        <begin position="10"/>
        <end position="23"/>
    </location>
</feature>
<feature type="compositionally biased region" description="Polar residues" evidence="1">
    <location>
        <begin position="48"/>
        <end position="57"/>
    </location>
</feature>
<keyword id="KW-1185">Reference proteome</keyword>
<dbReference type="EMBL" id="X73675">
    <property type="protein sequence ID" value="CAA52025.1"/>
    <property type="status" value="ALT_FRAME"/>
    <property type="molecule type" value="Genomic_DNA"/>
</dbReference>
<dbReference type="EMBL" id="X79798">
    <property type="protein sequence ID" value="CAA56192.1"/>
    <property type="molecule type" value="Genomic_DNA"/>
</dbReference>
<dbReference type="EMBL" id="X83413">
    <property type="status" value="NOT_ANNOTATED_CDS"/>
    <property type="molecule type" value="Genomic_DNA"/>
</dbReference>
<dbReference type="PIR" id="S43068">
    <property type="entry name" value="S43068"/>
</dbReference>
<dbReference type="Proteomes" id="UP000009295">
    <property type="component" value="Segment"/>
</dbReference>
<sequence>MWRSSNQRGVSRRRDKSMRKYTRHGNADRRQRAIASMASVRKKKPRSKNTYTGNISSLPPRPNHRNIHLRNPLSPRFYHGRVHTQTHRHAQPTHVVVAGGYVDGAYRGET</sequence>
<organism>
    <name type="scientific">Human herpesvirus 6A (strain Uganda-1102)</name>
    <name type="common">HHV-6 variant A</name>
    <name type="synonym">Human B lymphotropic virus</name>
    <dbReference type="NCBI Taxonomy" id="10370"/>
    <lineage>
        <taxon>Viruses</taxon>
        <taxon>Duplodnaviria</taxon>
        <taxon>Heunggongvirae</taxon>
        <taxon>Peploviricota</taxon>
        <taxon>Herviviricetes</taxon>
        <taxon>Herpesvirales</taxon>
        <taxon>Orthoherpesviridae</taxon>
        <taxon>Betaherpesvirinae</taxon>
        <taxon>Roseolovirus</taxon>
        <taxon>Roseolovirus humanbeta6a</taxon>
        <taxon>Human betaherpesvirus 6A</taxon>
    </lineage>
</organism>
<evidence type="ECO:0000256" key="1">
    <source>
        <dbReference type="SAM" id="MobiDB-lite"/>
    </source>
</evidence>
<evidence type="ECO:0000305" key="2"/>
<proteinExistence type="predicted"/>
<gene>
    <name type="primary">DR8L</name>
    <name type="synonym">SJRF1</name>
</gene>
<gene>
    <name type="primary">DR8R</name>
    <name type="synonym">SJRF1</name>
</gene>
<organismHost>
    <name type="scientific">Homo sapiens</name>
    <name type="common">Human</name>
    <dbReference type="NCBI Taxonomy" id="9606"/>
</organismHost>
<accession>Q89565</accession>
<accession>Q69579</accession>
<accession>Q76QV1</accession>
<comment type="sequence caution" evidence="2">
    <conflict type="frameshift">
        <sequence resource="EMBL-CDS" id="CAA52025"/>
    </conflict>
</comment>
<reference key="1">
    <citation type="journal article" date="1994" name="Oncogene">
        <title>A transforming fragment within the direct repeat region of human herpesvirus type 6 that transactivates HIV-1.</title>
        <authorList>
            <person name="Thompson J."/>
            <person name="Choudhury S."/>
            <person name="Kashanchi F."/>
            <person name="Doniger J."/>
            <person name="Berneman Z."/>
            <person name="Frenkel N."/>
            <person name="Rosenthal L.J."/>
        </authorList>
    </citation>
    <scope>NUCLEOTIDE SEQUENCE [GENOMIC DNA]</scope>
</reference>
<reference key="2">
    <citation type="journal article" date="1995" name="J. Gen. Virol.">
        <title>Characterization of human telomeric repeat sequences from human herpesvirus 6 and relationship to replication.</title>
        <authorList>
            <person name="Gompels U.A."/>
            <person name="Macaulay H.A."/>
        </authorList>
    </citation>
    <scope>NUCLEOTIDE SEQUENCE [GENOMIC DNA]</scope>
</reference>
<reference key="3">
    <citation type="journal article" date="1995" name="Virology">
        <title>The DNA sequence of human herpesvirus-6: structure, coding content, and genome evolution.</title>
        <authorList>
            <person name="Gompels U.A."/>
            <person name="Nicholas J."/>
            <person name="Lawrence G.L."/>
            <person name="Jones M."/>
            <person name="Thomson B.J."/>
            <person name="Martin M.E.D."/>
            <person name="Efstathiou S."/>
            <person name="Craxton M.A."/>
            <person name="Macaulay H.A."/>
        </authorList>
    </citation>
    <scope>NUCLEOTIDE SEQUENCE [LARGE SCALE GENOMIC DNA]</scope>
</reference>